<sequence length="244" mass="26436">MARWRRRLGVAALGAAMLASLAPAARASLVITGTRVIYNAGSPETTVKMSNEGQAPALMQAWIDDGNAEAKPDEVQVPFFLTPPLARVDPGKGQTLRIFFNGYPDGKTLPSDRESVFWLNVLEVPPKATPEEGHGVLQLTIRSRLKLFYRPKGLSGNPLTAAADLTFKRKPNGVLEVHNPTPYYVNLQKLEVGENGAHGSKTPWMLAPLSSDELRLKGTGAKSVQYWAIDDFGGVTPYQAAIAD</sequence>
<dbReference type="EMBL" id="X64876">
    <property type="protein sequence ID" value="CAA46089.1"/>
    <property type="molecule type" value="Genomic_DNA"/>
</dbReference>
<dbReference type="EMBL" id="X66729">
    <property type="protein sequence ID" value="CAA47265.1"/>
    <property type="molecule type" value="Genomic_DNA"/>
</dbReference>
<dbReference type="EMBL" id="BX640416">
    <property type="protein sequence ID" value="CAE42164.1"/>
    <property type="molecule type" value="Genomic_DNA"/>
</dbReference>
<dbReference type="PIR" id="S36245">
    <property type="entry name" value="S36245"/>
</dbReference>
<dbReference type="RefSeq" id="NP_880572.1">
    <property type="nucleotide sequence ID" value="NC_002929.2"/>
</dbReference>
<dbReference type="RefSeq" id="WP_010930611.1">
    <property type="nucleotide sequence ID" value="NZ_CP039022.1"/>
</dbReference>
<dbReference type="SMR" id="P33409"/>
<dbReference type="STRING" id="257313.BP1881"/>
<dbReference type="PaxDb" id="257313-BP1881"/>
<dbReference type="GeneID" id="69601665"/>
<dbReference type="KEGG" id="bpe:BP1881"/>
<dbReference type="PATRIC" id="fig|257313.5.peg.2019"/>
<dbReference type="eggNOG" id="COG3121">
    <property type="taxonomic scope" value="Bacteria"/>
</dbReference>
<dbReference type="HOGENOM" id="CLU_070768_0_2_4"/>
<dbReference type="Proteomes" id="UP000002676">
    <property type="component" value="Chromosome"/>
</dbReference>
<dbReference type="GO" id="GO:0030288">
    <property type="term" value="C:outer membrane-bounded periplasmic space"/>
    <property type="evidence" value="ECO:0007669"/>
    <property type="project" value="InterPro"/>
</dbReference>
<dbReference type="GO" id="GO:0071555">
    <property type="term" value="P:cell wall organization"/>
    <property type="evidence" value="ECO:0007669"/>
    <property type="project" value="InterPro"/>
</dbReference>
<dbReference type="GO" id="GO:0061077">
    <property type="term" value="P:chaperone-mediated protein folding"/>
    <property type="evidence" value="ECO:0007669"/>
    <property type="project" value="InterPro"/>
</dbReference>
<dbReference type="Gene3D" id="2.60.40.10">
    <property type="entry name" value="Immunoglobulins"/>
    <property type="match status" value="2"/>
</dbReference>
<dbReference type="InterPro" id="IPR013783">
    <property type="entry name" value="Ig-like_fold"/>
</dbReference>
<dbReference type="InterPro" id="IPR008962">
    <property type="entry name" value="PapD-like_sf"/>
</dbReference>
<dbReference type="InterPro" id="IPR050643">
    <property type="entry name" value="Periplasmic_pilus_chap"/>
</dbReference>
<dbReference type="InterPro" id="IPR036316">
    <property type="entry name" value="Pili_assmbl_chap_C_dom_sf"/>
</dbReference>
<dbReference type="InterPro" id="IPR001829">
    <property type="entry name" value="Pili_assmbl_chaperone_bac"/>
</dbReference>
<dbReference type="InterPro" id="IPR016148">
    <property type="entry name" value="Pili_assmbl_chaperone_C"/>
</dbReference>
<dbReference type="InterPro" id="IPR018046">
    <property type="entry name" value="Pili_assmbl_chaperone_CS"/>
</dbReference>
<dbReference type="InterPro" id="IPR016147">
    <property type="entry name" value="Pili_assmbl_chaperone_N"/>
</dbReference>
<dbReference type="PANTHER" id="PTHR30251:SF2">
    <property type="entry name" value="FIMBRIAL CHAPERONE YADV-RELATED"/>
    <property type="match status" value="1"/>
</dbReference>
<dbReference type="PANTHER" id="PTHR30251">
    <property type="entry name" value="PILUS ASSEMBLY CHAPERONE"/>
    <property type="match status" value="1"/>
</dbReference>
<dbReference type="Pfam" id="PF02753">
    <property type="entry name" value="PapD_C"/>
    <property type="match status" value="1"/>
</dbReference>
<dbReference type="Pfam" id="PF00345">
    <property type="entry name" value="PapD_N"/>
    <property type="match status" value="1"/>
</dbReference>
<dbReference type="PRINTS" id="PR00969">
    <property type="entry name" value="CHAPERONPILI"/>
</dbReference>
<dbReference type="SUPFAM" id="SSF49354">
    <property type="entry name" value="PapD-like"/>
    <property type="match status" value="1"/>
</dbReference>
<dbReference type="SUPFAM" id="SSF49584">
    <property type="entry name" value="Periplasmic chaperone C-domain"/>
    <property type="match status" value="1"/>
</dbReference>
<dbReference type="PROSITE" id="PS00635">
    <property type="entry name" value="PILI_CHAPERONE"/>
    <property type="match status" value="1"/>
</dbReference>
<evidence type="ECO:0000250" key="1"/>
<evidence type="ECO:0000255" key="2"/>
<evidence type="ECO:0000305" key="3"/>
<accession>P33409</accession>
<reference key="1">
    <citation type="journal article" date="1992" name="Mol. Microbiol.">
        <title>Characterization of a Bordetella pertussis fimbrial gene cluster which is located directly downstream of the filamentous haemagglutinin gene.</title>
        <authorList>
            <person name="Willems R.J.L."/>
            <person name="van der Heide H.G.J."/>
            <person name="Mooi F.R."/>
        </authorList>
    </citation>
    <scope>NUCLEOTIDE SEQUENCE [GENOMIC DNA]</scope>
    <source>
        <strain>Wellcome 28</strain>
    </source>
</reference>
<reference key="2">
    <citation type="journal article" date="1992" name="EMBO J.">
        <title>Common accessory genes for the Bordetella pertussis filamentous hemagglutinin and fimbriae share sequence similarities with the papC and papD gene families.</title>
        <authorList>
            <person name="Locht C."/>
            <person name="Geoffroy M.C."/>
            <person name="Renauld G."/>
        </authorList>
    </citation>
    <scope>NUCLEOTIDE SEQUENCE [GENOMIC DNA]</scope>
    <source>
        <strain>Tohama I / ATCC BAA-589 / NCTC 13251</strain>
    </source>
</reference>
<reference key="3">
    <citation type="journal article" date="2003" name="Nat. Genet.">
        <title>Comparative analysis of the genome sequences of Bordetella pertussis, Bordetella parapertussis and Bordetella bronchiseptica.</title>
        <authorList>
            <person name="Parkhill J."/>
            <person name="Sebaihia M."/>
            <person name="Preston A."/>
            <person name="Murphy L.D."/>
            <person name="Thomson N.R."/>
            <person name="Harris D.E."/>
            <person name="Holden M.T.G."/>
            <person name="Churcher C.M."/>
            <person name="Bentley S.D."/>
            <person name="Mungall K.L."/>
            <person name="Cerdeno-Tarraga A.-M."/>
            <person name="Temple L."/>
            <person name="James K.D."/>
            <person name="Harris B."/>
            <person name="Quail M.A."/>
            <person name="Achtman M."/>
            <person name="Atkin R."/>
            <person name="Baker S."/>
            <person name="Basham D."/>
            <person name="Bason N."/>
            <person name="Cherevach I."/>
            <person name="Chillingworth T."/>
            <person name="Collins M."/>
            <person name="Cronin A."/>
            <person name="Davis P."/>
            <person name="Doggett J."/>
            <person name="Feltwell T."/>
            <person name="Goble A."/>
            <person name="Hamlin N."/>
            <person name="Hauser H."/>
            <person name="Holroyd S."/>
            <person name="Jagels K."/>
            <person name="Leather S."/>
            <person name="Moule S."/>
            <person name="Norberczak H."/>
            <person name="O'Neil S."/>
            <person name="Ormond D."/>
            <person name="Price C."/>
            <person name="Rabbinowitsch E."/>
            <person name="Rutter S."/>
            <person name="Sanders M."/>
            <person name="Saunders D."/>
            <person name="Seeger K."/>
            <person name="Sharp S."/>
            <person name="Simmonds M."/>
            <person name="Skelton J."/>
            <person name="Squares R."/>
            <person name="Squares S."/>
            <person name="Stevens K."/>
            <person name="Unwin L."/>
            <person name="Whitehead S."/>
            <person name="Barrell B.G."/>
            <person name="Maskell D.J."/>
        </authorList>
    </citation>
    <scope>NUCLEOTIDE SEQUENCE [LARGE SCALE GENOMIC DNA]</scope>
    <source>
        <strain>Tohama I / ATCC BAA-589 / NCTC 13251</strain>
    </source>
</reference>
<gene>
    <name type="primary">fimB</name>
    <name type="synonym">fhaD</name>
    <name type="ordered locus">BP1881</name>
</gene>
<proteinExistence type="inferred from homology"/>
<keyword id="KW-0143">Chaperone</keyword>
<keyword id="KW-1029">Fimbrium biogenesis</keyword>
<keyword id="KW-0393">Immunoglobulin domain</keyword>
<keyword id="KW-0574">Periplasm</keyword>
<keyword id="KW-1185">Reference proteome</keyword>
<keyword id="KW-0732">Signal</keyword>
<comment type="function">
    <text>Required for the biogenesis of the filamentous hemagglutinin and the fimbria.</text>
</comment>
<comment type="subcellular location">
    <subcellularLocation>
        <location evidence="1">Periplasm</location>
    </subcellularLocation>
</comment>
<comment type="similarity">
    <text evidence="3">Belongs to the periplasmic pilus chaperone family.</text>
</comment>
<organism>
    <name type="scientific">Bordetella pertussis (strain Tohama I / ATCC BAA-589 / NCTC 13251)</name>
    <dbReference type="NCBI Taxonomy" id="257313"/>
    <lineage>
        <taxon>Bacteria</taxon>
        <taxon>Pseudomonadati</taxon>
        <taxon>Pseudomonadota</taxon>
        <taxon>Betaproteobacteria</taxon>
        <taxon>Burkholderiales</taxon>
        <taxon>Alcaligenaceae</taxon>
        <taxon>Bordetella</taxon>
    </lineage>
</organism>
<protein>
    <recommendedName>
        <fullName>Chaperone protein FimB/FhaD</fullName>
    </recommendedName>
</protein>
<name>FIMB_BORPE</name>
<feature type="signal peptide" evidence="2">
    <location>
        <begin position="1"/>
        <end position="24"/>
    </location>
</feature>
<feature type="chain" id="PRO_0000009272" description="Chaperone protein FimB/FhaD">
    <location>
        <begin position="25"/>
        <end position="244"/>
    </location>
</feature>
<feature type="sequence conflict" description="In Ref. 1; CAA46089." evidence="3" ref="1">
    <original>A</original>
    <variation>D</variation>
    <location>
        <position position="27"/>
    </location>
</feature>